<gene>
    <name evidence="1" type="primary">yjjB</name>
    <name type="ordered locus">ECP_4694</name>
</gene>
<evidence type="ECO:0000255" key="1">
    <source>
        <dbReference type="HAMAP-Rule" id="MF_01191"/>
    </source>
</evidence>
<reference key="1">
    <citation type="journal article" date="2006" name="Mol. Microbiol.">
        <title>Role of pathogenicity island-associated integrases in the genome plasticity of uropathogenic Escherichia coli strain 536.</title>
        <authorList>
            <person name="Hochhut B."/>
            <person name="Wilde C."/>
            <person name="Balling G."/>
            <person name="Middendorf B."/>
            <person name="Dobrindt U."/>
            <person name="Brzuszkiewicz E."/>
            <person name="Gottschalk G."/>
            <person name="Carniel E."/>
            <person name="Hacker J."/>
        </authorList>
    </citation>
    <scope>NUCLEOTIDE SEQUENCE [LARGE SCALE GENOMIC DNA]</scope>
    <source>
        <strain>536 / UPEC</strain>
    </source>
</reference>
<sequence>MGVIEFLLALAQDMILAAIPAVGFAMVFNVPVRALRWCALLGAIGHGSRMILMTSGLNIEWSTFMASMLVGTIGIQWSRWYLAHPKVFTVAAVIPMFPGISAYTAMISAVKISQLGYSEPLMITLLTNFLTASSIVGALSIGLSIPGLWLYRKRPRV</sequence>
<dbReference type="EMBL" id="CP000247">
    <property type="protein sequence ID" value="ABG72630.1"/>
    <property type="molecule type" value="Genomic_DNA"/>
</dbReference>
<dbReference type="RefSeq" id="WP_000538188.1">
    <property type="nucleotide sequence ID" value="NC_008253.1"/>
</dbReference>
<dbReference type="KEGG" id="ecp:ECP_4694"/>
<dbReference type="HOGENOM" id="CLU_117642_1_0_6"/>
<dbReference type="Proteomes" id="UP000009182">
    <property type="component" value="Chromosome"/>
</dbReference>
<dbReference type="GO" id="GO:0005886">
    <property type="term" value="C:plasma membrane"/>
    <property type="evidence" value="ECO:0007669"/>
    <property type="project" value="UniProtKB-SubCell"/>
</dbReference>
<dbReference type="GO" id="GO:0015744">
    <property type="term" value="P:succinate transport"/>
    <property type="evidence" value="ECO:0007669"/>
    <property type="project" value="UniProtKB-UniRule"/>
</dbReference>
<dbReference type="HAMAP" id="MF_01191">
    <property type="entry name" value="YjjB"/>
    <property type="match status" value="1"/>
</dbReference>
<dbReference type="InterPro" id="IPR024528">
    <property type="entry name" value="ThrE_2"/>
</dbReference>
<dbReference type="InterPro" id="IPR050539">
    <property type="entry name" value="ThrE_Dicarb/AminoAcid_Exp"/>
</dbReference>
<dbReference type="InterPro" id="IPR020914">
    <property type="entry name" value="YjjB"/>
</dbReference>
<dbReference type="NCBIfam" id="NF007391">
    <property type="entry name" value="PRK09917.1"/>
    <property type="match status" value="1"/>
</dbReference>
<dbReference type="PANTHER" id="PTHR34390:SF1">
    <property type="entry name" value="SUCCINATE TRANSPORTER SUBUNIT YJJB-RELATED"/>
    <property type="match status" value="1"/>
</dbReference>
<dbReference type="PANTHER" id="PTHR34390">
    <property type="entry name" value="UPF0442 PROTEIN YJJB-RELATED"/>
    <property type="match status" value="1"/>
</dbReference>
<dbReference type="Pfam" id="PF12821">
    <property type="entry name" value="ThrE_2"/>
    <property type="match status" value="1"/>
</dbReference>
<feature type="chain" id="PRO_0000293671" description="Probable succinate transporter subunit YjjB">
    <location>
        <begin position="1"/>
        <end position="157"/>
    </location>
</feature>
<feature type="transmembrane region" description="Helical" evidence="1">
    <location>
        <begin position="8"/>
        <end position="28"/>
    </location>
</feature>
<feature type="transmembrane region" description="Helical" evidence="1">
    <location>
        <begin position="50"/>
        <end position="70"/>
    </location>
</feature>
<feature type="transmembrane region" description="Helical" evidence="1">
    <location>
        <begin position="87"/>
        <end position="107"/>
    </location>
</feature>
<feature type="transmembrane region" description="Helical" evidence="1">
    <location>
        <begin position="129"/>
        <end position="149"/>
    </location>
</feature>
<keyword id="KW-0997">Cell inner membrane</keyword>
<keyword id="KW-1003">Cell membrane</keyword>
<keyword id="KW-0472">Membrane</keyword>
<keyword id="KW-0812">Transmembrane</keyword>
<keyword id="KW-1133">Transmembrane helix</keyword>
<keyword id="KW-0813">Transport</keyword>
<organism>
    <name type="scientific">Escherichia coli O6:K15:H31 (strain 536 / UPEC)</name>
    <dbReference type="NCBI Taxonomy" id="362663"/>
    <lineage>
        <taxon>Bacteria</taxon>
        <taxon>Pseudomonadati</taxon>
        <taxon>Pseudomonadota</taxon>
        <taxon>Gammaproteobacteria</taxon>
        <taxon>Enterobacterales</taxon>
        <taxon>Enterobacteriaceae</taxon>
        <taxon>Escherichia</taxon>
    </lineage>
</organism>
<comment type="function">
    <text evidence="1">Involved in succinate export with YjjP. Both proteins are required for export.</text>
</comment>
<comment type="subunit">
    <text evidence="1">The transporter is composed of YjjB and YjjP.</text>
</comment>
<comment type="subcellular location">
    <subcellularLocation>
        <location evidence="1">Cell inner membrane</location>
        <topology evidence="1">Multi-pass membrane protein</topology>
    </subcellularLocation>
</comment>
<comment type="similarity">
    <text evidence="1">Belongs to the ThrE exporter (TC 2.A.79) family.</text>
</comment>
<accession>Q0T8U9</accession>
<name>YJJB_ECOL5</name>
<proteinExistence type="inferred from homology"/>
<protein>
    <recommendedName>
        <fullName evidence="1">Probable succinate transporter subunit YjjB</fullName>
    </recommendedName>
</protein>